<comment type="function">
    <text evidence="1">Hydrolyzes N-terminal residues in D-amino acid-containing peptides.</text>
</comment>
<comment type="catalytic activity">
    <reaction evidence="1">
        <text>Release of an N-terminal D-amino acid from a peptide, Xaa-|-Yaa-, in which Xaa is preferably D-Ala, D-Ser or D-Thr. D-amino acid amides and methyl esters also are hydrolyzed, as is glycine amide.</text>
        <dbReference type="EC" id="3.4.11.19"/>
    </reaction>
</comment>
<comment type="activity regulation">
    <text evidence="1">Inhibited by beta-lactam compounds such as 6-aminopenicillic acid, 7-aminocephalosporanic acid, benzylpenicillin and ampicillin. Inhibited by p-chloromercuribenzoate.</text>
</comment>
<comment type="subunit">
    <text evidence="1">Homodimer.</text>
</comment>
<comment type="similarity">
    <text evidence="1">Belongs to the peptidase S12 family.</text>
</comment>
<feature type="chain" id="PRO_1000189066" description="D-aminopeptidase">
    <location>
        <begin position="1"/>
        <end position="518"/>
    </location>
</feature>
<feature type="region of interest" description="Disordered" evidence="2">
    <location>
        <begin position="373"/>
        <end position="392"/>
    </location>
</feature>
<feature type="region of interest" description="Important for specificity" evidence="1">
    <location>
        <begin position="477"/>
        <end position="487"/>
    </location>
</feature>
<feature type="active site" description="Nucleophile" evidence="1">
    <location>
        <position position="62"/>
    </location>
</feature>
<feature type="active site" description="Proton donor/acceptor" evidence="1">
    <location>
        <position position="65"/>
    </location>
</feature>
<feature type="binding site" evidence="1">
    <location>
        <position position="481"/>
    </location>
    <ligand>
        <name>substrate</name>
    </ligand>
</feature>
<dbReference type="EC" id="3.4.11.19" evidence="1"/>
<dbReference type="EMBL" id="CP001489">
    <property type="protein sequence ID" value="ACO02726.1"/>
    <property type="molecule type" value="Genomic_DNA"/>
</dbReference>
<dbReference type="RefSeq" id="WP_004685968.1">
    <property type="nucleotide sequence ID" value="NC_012442.1"/>
</dbReference>
<dbReference type="SMR" id="C0RM93"/>
<dbReference type="KEGG" id="bmi:BMEA_B0933"/>
<dbReference type="HOGENOM" id="CLU_020027_0_4_5"/>
<dbReference type="Proteomes" id="UP000001748">
    <property type="component" value="Chromosome II"/>
</dbReference>
<dbReference type="GO" id="GO:0004177">
    <property type="term" value="F:aminopeptidase activity"/>
    <property type="evidence" value="ECO:0007669"/>
    <property type="project" value="UniProtKB-UniRule"/>
</dbReference>
<dbReference type="GO" id="GO:0006508">
    <property type="term" value="P:proteolysis"/>
    <property type="evidence" value="ECO:0007669"/>
    <property type="project" value="UniProtKB-KW"/>
</dbReference>
<dbReference type="Gene3D" id="2.40.128.50">
    <property type="match status" value="2"/>
</dbReference>
<dbReference type="Gene3D" id="3.40.710.10">
    <property type="entry name" value="DD-peptidase/beta-lactamase superfamily"/>
    <property type="match status" value="1"/>
</dbReference>
<dbReference type="HAMAP" id="MF_01960">
    <property type="entry name" value="D_aminopeptidase"/>
    <property type="match status" value="1"/>
</dbReference>
<dbReference type="InterPro" id="IPR050491">
    <property type="entry name" value="Bact_CellWall_Synth/Modif"/>
</dbReference>
<dbReference type="InterPro" id="IPR001466">
    <property type="entry name" value="Beta-lactam-related"/>
</dbReference>
<dbReference type="InterPro" id="IPR012338">
    <property type="entry name" value="Beta-lactam/transpept-like"/>
</dbReference>
<dbReference type="InterPro" id="IPR027279">
    <property type="entry name" value="D_amino_pept/lipop_sf"/>
</dbReference>
<dbReference type="InterPro" id="IPR023645">
    <property type="entry name" value="DAP"/>
</dbReference>
<dbReference type="InterPro" id="IPR012856">
    <property type="entry name" value="DAP_B_dom"/>
</dbReference>
<dbReference type="NCBIfam" id="NF009622">
    <property type="entry name" value="PRK13128.1"/>
    <property type="match status" value="1"/>
</dbReference>
<dbReference type="PANTHER" id="PTHR46825:SF9">
    <property type="entry name" value="BETA-LACTAMASE-RELATED DOMAIN-CONTAINING PROTEIN"/>
    <property type="match status" value="1"/>
</dbReference>
<dbReference type="PANTHER" id="PTHR46825">
    <property type="entry name" value="D-ALANYL-D-ALANINE-CARBOXYPEPTIDASE/ENDOPEPTIDASE AMPH"/>
    <property type="match status" value="1"/>
</dbReference>
<dbReference type="Pfam" id="PF00144">
    <property type="entry name" value="Beta-lactamase"/>
    <property type="match status" value="1"/>
</dbReference>
<dbReference type="Pfam" id="PF07930">
    <property type="entry name" value="DAP_B"/>
    <property type="match status" value="1"/>
</dbReference>
<dbReference type="SUPFAM" id="SSF56601">
    <property type="entry name" value="beta-lactamase/transpeptidase-like"/>
    <property type="match status" value="1"/>
</dbReference>
<dbReference type="SUPFAM" id="SSF50886">
    <property type="entry name" value="D-aminopeptidase, middle and C-terminal domains"/>
    <property type="match status" value="2"/>
</dbReference>
<accession>C0RM93</accession>
<name>DAP_BRUMB</name>
<evidence type="ECO:0000255" key="1">
    <source>
        <dbReference type="HAMAP-Rule" id="MF_01960"/>
    </source>
</evidence>
<evidence type="ECO:0000256" key="2">
    <source>
        <dbReference type="SAM" id="MobiDB-lite"/>
    </source>
</evidence>
<proteinExistence type="inferred from homology"/>
<sequence length="518" mass="56887">MPNIDLPTLEAFVHAIPQNYKGPGGAVAVVRNGEIVLRHAWGFADLAARKAMTPETRMPICSVSKQFTCAVLLDCIGEPEMLDSALAAYLDQFEDGRPAVRDLCNNQSGLRDYWALTVLCGAAPEGIFLPDQAQNLLRRLKTTHFAPGTHYSYCNGNFRILADLIEQHTGRSLADLLAERIFAPAAMKTAELIPDTALFNECTGYEGDTVRGFLPAINRIHWLGDAGICASLDDMIAWEQFIDRTRHDENGLYRRLSSPQTFADGAPAPYGFGLKFEETGGKRLTGHGGALRGWRCQRWHCADERISTIVMFNFEGNASDAALKMMNAALGIPPAKPVRAQANPGWFGSWLNPETGLVLSLEDAGGGRMKARFGTGPEKMDISGENEAQSSMTTLRRDGDMIHLARKDENLHLAMHRLKGKARQDIAGRYRSDELEADLLLVSEGGAIYGAFEGFLGKSDMYPLYAAGPDVWLLPVQRSMDAPSPGEWKLVFHRDAAGRITGVTVGCWLARGVEYKRL</sequence>
<keyword id="KW-0031">Aminopeptidase</keyword>
<keyword id="KW-0378">Hydrolase</keyword>
<keyword id="KW-0645">Protease</keyword>
<gene>
    <name evidence="1" type="primary">dap</name>
    <name type="ordered locus">BMEA_B0933</name>
</gene>
<protein>
    <recommendedName>
        <fullName evidence="1">D-aminopeptidase</fullName>
        <ecNumber evidence="1">3.4.11.19</ecNumber>
    </recommendedName>
</protein>
<reference key="1">
    <citation type="submission" date="2009-03" db="EMBL/GenBank/DDBJ databases">
        <title>Brucella melitensis ATCC 23457 whole genome shotgun sequencing project.</title>
        <authorList>
            <person name="Setubal J.C."/>
            <person name="Boyle S."/>
            <person name="Crasta O.R."/>
            <person name="Gillespie J.J."/>
            <person name="Kenyon R.W."/>
            <person name="Lu J."/>
            <person name="Mane S."/>
            <person name="Nagrani S."/>
            <person name="Shallom J.M."/>
            <person name="Shallom S."/>
            <person name="Shukla M."/>
            <person name="Snyder E.E."/>
            <person name="Sobral B.W."/>
            <person name="Wattam A.R."/>
            <person name="Will R."/>
            <person name="Williams K."/>
            <person name="Yoo H."/>
            <person name="Munk C."/>
            <person name="Tapia R."/>
            <person name="Han C."/>
            <person name="Detter J.C."/>
            <person name="Bruce D."/>
            <person name="Brettin T.S."/>
        </authorList>
    </citation>
    <scope>NUCLEOTIDE SEQUENCE [LARGE SCALE GENOMIC DNA]</scope>
    <source>
        <strain>ATCC 23457</strain>
    </source>
</reference>
<organism>
    <name type="scientific">Brucella melitensis biotype 2 (strain ATCC 23457)</name>
    <dbReference type="NCBI Taxonomy" id="546272"/>
    <lineage>
        <taxon>Bacteria</taxon>
        <taxon>Pseudomonadati</taxon>
        <taxon>Pseudomonadota</taxon>
        <taxon>Alphaproteobacteria</taxon>
        <taxon>Hyphomicrobiales</taxon>
        <taxon>Brucellaceae</taxon>
        <taxon>Brucella/Ochrobactrum group</taxon>
        <taxon>Brucella</taxon>
    </lineage>
</organism>